<evidence type="ECO:0000250" key="1">
    <source>
        <dbReference type="UniProtKB" id="P00962"/>
    </source>
</evidence>
<evidence type="ECO:0000250" key="2">
    <source>
        <dbReference type="UniProtKB" id="P47897"/>
    </source>
</evidence>
<evidence type="ECO:0000256" key="3">
    <source>
        <dbReference type="SAM" id="MobiDB-lite"/>
    </source>
</evidence>
<evidence type="ECO:0000269" key="4">
    <source>
    </source>
</evidence>
<evidence type="ECO:0000303" key="5">
    <source>
    </source>
</evidence>
<evidence type="ECO:0000305" key="6"/>
<evidence type="ECO:0000305" key="7">
    <source>
    </source>
</evidence>
<evidence type="ECO:0000305" key="8">
    <source>
    </source>
</evidence>
<evidence type="ECO:0000312" key="9">
    <source>
        <dbReference type="Araport" id="AT1G25350"/>
    </source>
</evidence>
<evidence type="ECO:0000312" key="10">
    <source>
        <dbReference type="EMBL" id="AAG28806.2"/>
    </source>
</evidence>
<protein>
    <recommendedName>
        <fullName evidence="6">Glutamine--tRNA ligase, cytoplasmic</fullName>
        <ecNumber evidence="2">6.1.1.18</ecNumber>
    </recommendedName>
    <alternativeName>
        <fullName evidence="6">Glutaminyl-tRNA synthetase</fullName>
        <shortName evidence="6">GlnRS</shortName>
    </alternativeName>
    <alternativeName>
        <fullName evidence="5">Protein OVULE ABORTION 9</fullName>
    </alternativeName>
</protein>
<keyword id="KW-0025">Alternative splicing</keyword>
<keyword id="KW-0030">Aminoacyl-tRNA synthetase</keyword>
<keyword id="KW-0067">ATP-binding</keyword>
<keyword id="KW-0963">Cytoplasm</keyword>
<keyword id="KW-0436">Ligase</keyword>
<keyword id="KW-0547">Nucleotide-binding</keyword>
<keyword id="KW-0648">Protein biosynthesis</keyword>
<keyword id="KW-1185">Reference proteome</keyword>
<feature type="chain" id="PRO_0000433534" description="Glutamine--tRNA ligase, cytoplasmic">
    <location>
        <begin position="1"/>
        <end position="795"/>
    </location>
</feature>
<feature type="region of interest" description="Disordered" evidence="3">
    <location>
        <begin position="188"/>
        <end position="220"/>
    </location>
</feature>
<feature type="short sequence motif" description="'HIGH' region" evidence="6">
    <location>
        <begin position="277"/>
        <end position="287"/>
    </location>
</feature>
<feature type="short sequence motif" description="'KMSKS' region" evidence="6">
    <location>
        <begin position="505"/>
        <end position="509"/>
    </location>
</feature>
<feature type="compositionally biased region" description="Basic and acidic residues" evidence="3">
    <location>
        <begin position="200"/>
        <end position="212"/>
    </location>
</feature>
<feature type="binding site" evidence="1">
    <location>
        <begin position="278"/>
        <end position="280"/>
    </location>
    <ligand>
        <name>ATP</name>
        <dbReference type="ChEBI" id="CHEBI:30616"/>
    </ligand>
</feature>
<feature type="binding site" evidence="1">
    <location>
        <begin position="284"/>
        <end position="290"/>
    </location>
    <ligand>
        <name>ATP</name>
        <dbReference type="ChEBI" id="CHEBI:30616"/>
    </ligand>
</feature>
<feature type="binding site" evidence="1">
    <location>
        <position position="310"/>
    </location>
    <ligand>
        <name>L-glutamine</name>
        <dbReference type="ChEBI" id="CHEBI:58359"/>
    </ligand>
</feature>
<feature type="binding site" evidence="1">
    <location>
        <position position="450"/>
    </location>
    <ligand>
        <name>L-glutamine</name>
        <dbReference type="ChEBI" id="CHEBI:58359"/>
    </ligand>
</feature>
<feature type="binding site" evidence="1">
    <location>
        <position position="469"/>
    </location>
    <ligand>
        <name>ATP</name>
        <dbReference type="ChEBI" id="CHEBI:30616"/>
    </ligand>
</feature>
<feature type="binding site" evidence="1">
    <location>
        <begin position="498"/>
        <end position="499"/>
    </location>
    <ligand>
        <name>ATP</name>
        <dbReference type="ChEBI" id="CHEBI:30616"/>
    </ligand>
</feature>
<feature type="binding site" evidence="1">
    <location>
        <begin position="506"/>
        <end position="508"/>
    </location>
    <ligand>
        <name>ATP</name>
        <dbReference type="ChEBI" id="CHEBI:30616"/>
    </ligand>
</feature>
<reference key="1">
    <citation type="journal article" date="2000" name="Nature">
        <title>Sequence and analysis of chromosome 1 of the plant Arabidopsis thaliana.</title>
        <authorList>
            <person name="Theologis A."/>
            <person name="Ecker J.R."/>
            <person name="Palm C.J."/>
            <person name="Federspiel N.A."/>
            <person name="Kaul S."/>
            <person name="White O."/>
            <person name="Alonso J."/>
            <person name="Altafi H."/>
            <person name="Araujo R."/>
            <person name="Bowman C.L."/>
            <person name="Brooks S.Y."/>
            <person name="Buehler E."/>
            <person name="Chan A."/>
            <person name="Chao Q."/>
            <person name="Chen H."/>
            <person name="Cheuk R.F."/>
            <person name="Chin C.W."/>
            <person name="Chung M.K."/>
            <person name="Conn L."/>
            <person name="Conway A.B."/>
            <person name="Conway A.R."/>
            <person name="Creasy T.H."/>
            <person name="Dewar K."/>
            <person name="Dunn P."/>
            <person name="Etgu P."/>
            <person name="Feldblyum T.V."/>
            <person name="Feng J.-D."/>
            <person name="Fong B."/>
            <person name="Fujii C.Y."/>
            <person name="Gill J.E."/>
            <person name="Goldsmith A.D."/>
            <person name="Haas B."/>
            <person name="Hansen N.F."/>
            <person name="Hughes B."/>
            <person name="Huizar L."/>
            <person name="Hunter J.L."/>
            <person name="Jenkins J."/>
            <person name="Johnson-Hopson C."/>
            <person name="Khan S."/>
            <person name="Khaykin E."/>
            <person name="Kim C.J."/>
            <person name="Koo H.L."/>
            <person name="Kremenetskaia I."/>
            <person name="Kurtz D.B."/>
            <person name="Kwan A."/>
            <person name="Lam B."/>
            <person name="Langin-Hooper S."/>
            <person name="Lee A."/>
            <person name="Lee J.M."/>
            <person name="Lenz C.A."/>
            <person name="Li J.H."/>
            <person name="Li Y.-P."/>
            <person name="Lin X."/>
            <person name="Liu S.X."/>
            <person name="Liu Z.A."/>
            <person name="Luros J.S."/>
            <person name="Maiti R."/>
            <person name="Marziali A."/>
            <person name="Militscher J."/>
            <person name="Miranda M."/>
            <person name="Nguyen M."/>
            <person name="Nierman W.C."/>
            <person name="Osborne B.I."/>
            <person name="Pai G."/>
            <person name="Peterson J."/>
            <person name="Pham P.K."/>
            <person name="Rizzo M."/>
            <person name="Rooney T."/>
            <person name="Rowley D."/>
            <person name="Sakano H."/>
            <person name="Salzberg S.L."/>
            <person name="Schwartz J.R."/>
            <person name="Shinn P."/>
            <person name="Southwick A.M."/>
            <person name="Sun H."/>
            <person name="Tallon L.J."/>
            <person name="Tambunga G."/>
            <person name="Toriumi M.J."/>
            <person name="Town C.D."/>
            <person name="Utterback T."/>
            <person name="Van Aken S."/>
            <person name="Vaysberg M."/>
            <person name="Vysotskaia V.S."/>
            <person name="Walker M."/>
            <person name="Wu D."/>
            <person name="Yu G."/>
            <person name="Fraser C.M."/>
            <person name="Venter J.C."/>
            <person name="Davis R.W."/>
        </authorList>
    </citation>
    <scope>NUCLEOTIDE SEQUENCE [LARGE SCALE GENOMIC DNA]</scope>
    <source>
        <strain>cv. Columbia</strain>
    </source>
</reference>
<reference key="2">
    <citation type="journal article" date="2017" name="Plant J.">
        <title>Araport11: a complete reannotation of the Arabidopsis thaliana reference genome.</title>
        <authorList>
            <person name="Cheng C.Y."/>
            <person name="Krishnakumar V."/>
            <person name="Chan A.P."/>
            <person name="Thibaud-Nissen F."/>
            <person name="Schobel S."/>
            <person name="Town C.D."/>
        </authorList>
    </citation>
    <scope>GENOME REANNOTATION</scope>
    <source>
        <strain>cv. Columbia</strain>
    </source>
</reference>
<reference key="3">
    <citation type="journal article" date="2003" name="Science">
        <title>Empirical analysis of transcriptional activity in the Arabidopsis genome.</title>
        <authorList>
            <person name="Yamada K."/>
            <person name="Lim J."/>
            <person name="Dale J.M."/>
            <person name="Chen H."/>
            <person name="Shinn P."/>
            <person name="Palm C.J."/>
            <person name="Southwick A.M."/>
            <person name="Wu H.C."/>
            <person name="Kim C.J."/>
            <person name="Nguyen M."/>
            <person name="Pham P.K."/>
            <person name="Cheuk R.F."/>
            <person name="Karlin-Newmann G."/>
            <person name="Liu S.X."/>
            <person name="Lam B."/>
            <person name="Sakano H."/>
            <person name="Wu T."/>
            <person name="Yu G."/>
            <person name="Miranda M."/>
            <person name="Quach H.L."/>
            <person name="Tripp M."/>
            <person name="Chang C.H."/>
            <person name="Lee J.M."/>
            <person name="Toriumi M.J."/>
            <person name="Chan M.M."/>
            <person name="Tang C.C."/>
            <person name="Onodera C.S."/>
            <person name="Deng J.M."/>
            <person name="Akiyama K."/>
            <person name="Ansari Y."/>
            <person name="Arakawa T."/>
            <person name="Banh J."/>
            <person name="Banno F."/>
            <person name="Bowser L."/>
            <person name="Brooks S.Y."/>
            <person name="Carninci P."/>
            <person name="Chao Q."/>
            <person name="Choy N."/>
            <person name="Enju A."/>
            <person name="Goldsmith A.D."/>
            <person name="Gurjal M."/>
            <person name="Hansen N.F."/>
            <person name="Hayashizaki Y."/>
            <person name="Johnson-Hopson C."/>
            <person name="Hsuan V.W."/>
            <person name="Iida K."/>
            <person name="Karnes M."/>
            <person name="Khan S."/>
            <person name="Koesema E."/>
            <person name="Ishida J."/>
            <person name="Jiang P.X."/>
            <person name="Jones T."/>
            <person name="Kawai J."/>
            <person name="Kamiya A."/>
            <person name="Meyers C."/>
            <person name="Nakajima M."/>
            <person name="Narusaka M."/>
            <person name="Seki M."/>
            <person name="Sakurai T."/>
            <person name="Satou M."/>
            <person name="Tamse R."/>
            <person name="Vaysberg M."/>
            <person name="Wallender E.K."/>
            <person name="Wong C."/>
            <person name="Yamamura Y."/>
            <person name="Yuan S."/>
            <person name="Shinozaki K."/>
            <person name="Davis R.W."/>
            <person name="Theologis A."/>
            <person name="Ecker J.R."/>
        </authorList>
    </citation>
    <scope>NUCLEOTIDE SEQUENCE [LARGE SCALE MRNA]</scope>
    <source>
        <strain>cv. Columbia</strain>
    </source>
</reference>
<reference key="4">
    <citation type="journal article" date="2005" name="Plant J.">
        <title>Requirement of aminoacyl-tRNA synthetases for gametogenesis and embryo development in Arabidopsis.</title>
        <authorList>
            <person name="Berg M."/>
            <person name="Rogers R."/>
            <person name="Muralla R."/>
            <person name="Meinke D."/>
        </authorList>
    </citation>
    <scope>SUBCELLULAR LOCATION</scope>
    <scope>DISRUPTION PHENOTYPE</scope>
</reference>
<reference key="5">
    <citation type="journal article" date="2005" name="Proc. Natl. Acad. Sci. U.S.A.">
        <title>Dual targeting is the rule for organellar aminoacyl-tRNA synthetases in Arabidopsis thaliana.</title>
        <authorList>
            <person name="Duchene A.-M."/>
            <person name="Giritch A."/>
            <person name="Hoffmann B."/>
            <person name="Cognat V."/>
            <person name="Lancelin D."/>
            <person name="Peeters N.M."/>
            <person name="Zaepfel M."/>
            <person name="Marechal-Drouard L."/>
            <person name="Small I.D."/>
        </authorList>
    </citation>
    <scope>SUBCELLULAR LOCATION</scope>
</reference>
<comment type="catalytic activity">
    <reaction evidence="2">
        <text>tRNA(Gln) + L-glutamine + ATP = L-glutaminyl-tRNA(Gln) + AMP + diphosphate</text>
        <dbReference type="Rhea" id="RHEA:20121"/>
        <dbReference type="Rhea" id="RHEA-COMP:9662"/>
        <dbReference type="Rhea" id="RHEA-COMP:9681"/>
        <dbReference type="ChEBI" id="CHEBI:30616"/>
        <dbReference type="ChEBI" id="CHEBI:33019"/>
        <dbReference type="ChEBI" id="CHEBI:58359"/>
        <dbReference type="ChEBI" id="CHEBI:78442"/>
        <dbReference type="ChEBI" id="CHEBI:78521"/>
        <dbReference type="ChEBI" id="CHEBI:456215"/>
        <dbReference type="EC" id="6.1.1.18"/>
    </reaction>
</comment>
<comment type="subcellular location">
    <subcellularLocation>
        <location evidence="7 8">Cytoplasm</location>
        <location evidence="7 8">Cytosol</location>
    </subcellularLocation>
</comment>
<comment type="alternative products">
    <event type="alternative splicing"/>
    <isoform>
        <id>Q8W4F3-1</id>
        <name>1</name>
        <sequence type="displayed"/>
    </isoform>
    <text evidence="6">A number of isoforms are produced. According to EST sequences.</text>
</comment>
<comment type="disruption phenotype">
    <text evidence="4">Lethal. In heterozygous plants, aborted ovules.</text>
</comment>
<comment type="similarity">
    <text evidence="6">Belongs to the class-I aminoacyl-tRNA synthetase family.</text>
</comment>
<comment type="sequence caution" evidence="6">
    <conflict type="erroneous gene model prediction">
        <sequence resource="EMBL-CDS" id="AAG28806"/>
    </conflict>
</comment>
<proteinExistence type="evidence at transcript level"/>
<dbReference type="EC" id="6.1.1.18" evidence="2"/>
<dbReference type="EMBL" id="AC079374">
    <property type="protein sequence ID" value="AAG28806.2"/>
    <property type="status" value="ALT_SEQ"/>
    <property type="molecule type" value="Genomic_DNA"/>
</dbReference>
<dbReference type="EMBL" id="CP002684">
    <property type="protein sequence ID" value="AEE30610.1"/>
    <property type="molecule type" value="Genomic_DNA"/>
</dbReference>
<dbReference type="EMBL" id="AY062594">
    <property type="protein sequence ID" value="AAL32672.1"/>
    <property type="molecule type" value="mRNA"/>
</dbReference>
<dbReference type="EMBL" id="AY114653">
    <property type="protein sequence ID" value="AAM47972.1"/>
    <property type="molecule type" value="mRNA"/>
</dbReference>
<dbReference type="PIR" id="D86381">
    <property type="entry name" value="D86381"/>
</dbReference>
<dbReference type="RefSeq" id="NP_173906.2">
    <molecule id="Q8W4F3-1"/>
    <property type="nucleotide sequence ID" value="NM_102345.4"/>
</dbReference>
<dbReference type="SMR" id="Q8W4F3"/>
<dbReference type="FunCoup" id="Q8W4F3">
    <property type="interactions" value="4795"/>
</dbReference>
<dbReference type="STRING" id="3702.Q8W4F3"/>
<dbReference type="iPTMnet" id="Q8W4F3"/>
<dbReference type="PaxDb" id="3702-AT1G25350.2"/>
<dbReference type="ProteomicsDB" id="228054">
    <molecule id="Q8W4F3-1"/>
</dbReference>
<dbReference type="EnsemblPlants" id="AT1G25350.1">
    <molecule id="Q8W4F3-1"/>
    <property type="protein sequence ID" value="AT1G25350.1"/>
    <property type="gene ID" value="AT1G25350"/>
</dbReference>
<dbReference type="GeneID" id="839120"/>
<dbReference type="Gramene" id="AT1G25350.1">
    <molecule id="Q8W4F3-1"/>
    <property type="protein sequence ID" value="AT1G25350.1"/>
    <property type="gene ID" value="AT1G25350"/>
</dbReference>
<dbReference type="KEGG" id="ath:AT1G25350"/>
<dbReference type="Araport" id="AT1G25350"/>
<dbReference type="TAIR" id="AT1G25350">
    <property type="gene designation" value="OVA9"/>
</dbReference>
<dbReference type="eggNOG" id="KOG1148">
    <property type="taxonomic scope" value="Eukaryota"/>
</dbReference>
<dbReference type="HOGENOM" id="CLU_001882_2_3_1"/>
<dbReference type="InParanoid" id="Q8W4F3"/>
<dbReference type="OrthoDB" id="10250478at2759"/>
<dbReference type="PhylomeDB" id="Q8W4F3"/>
<dbReference type="PRO" id="PR:Q8W4F3"/>
<dbReference type="Proteomes" id="UP000006548">
    <property type="component" value="Chromosome 1"/>
</dbReference>
<dbReference type="ExpressionAtlas" id="Q8W4F3">
    <property type="expression patterns" value="baseline and differential"/>
</dbReference>
<dbReference type="GO" id="GO:0005829">
    <property type="term" value="C:cytosol"/>
    <property type="evidence" value="ECO:0007669"/>
    <property type="project" value="UniProtKB-SubCell"/>
</dbReference>
<dbReference type="GO" id="GO:0005524">
    <property type="term" value="F:ATP binding"/>
    <property type="evidence" value="ECO:0007669"/>
    <property type="project" value="UniProtKB-KW"/>
</dbReference>
<dbReference type="GO" id="GO:0004819">
    <property type="term" value="F:glutamine-tRNA ligase activity"/>
    <property type="evidence" value="ECO:0007669"/>
    <property type="project" value="UniProtKB-EC"/>
</dbReference>
<dbReference type="GO" id="GO:0006425">
    <property type="term" value="P:glutaminyl-tRNA aminoacylation"/>
    <property type="evidence" value="ECO:0007669"/>
    <property type="project" value="InterPro"/>
</dbReference>
<dbReference type="GO" id="GO:0009791">
    <property type="term" value="P:post-embryonic development"/>
    <property type="evidence" value="ECO:0007669"/>
    <property type="project" value="UniProtKB-ARBA"/>
</dbReference>
<dbReference type="GO" id="GO:0048608">
    <property type="term" value="P:reproductive structure development"/>
    <property type="evidence" value="ECO:0007669"/>
    <property type="project" value="UniProtKB-ARBA"/>
</dbReference>
<dbReference type="CDD" id="cd00807">
    <property type="entry name" value="GlnRS_core"/>
    <property type="match status" value="1"/>
</dbReference>
<dbReference type="FunFam" id="2.40.240.10:FF:000007">
    <property type="entry name" value="Glutamine--tRNA ligase"/>
    <property type="match status" value="1"/>
</dbReference>
<dbReference type="FunFam" id="1.10.10.2420:FF:000001">
    <property type="entry name" value="Glutamine--tRNA ligase cytoplasmic"/>
    <property type="match status" value="1"/>
</dbReference>
<dbReference type="FunFam" id="1.10.8.1290:FF:000002">
    <property type="entry name" value="Glutamine--tRNA ligase cytoplasmic"/>
    <property type="match status" value="1"/>
</dbReference>
<dbReference type="FunFam" id="2.40.240.10:FF:000011">
    <property type="entry name" value="Glutamine--tRNA ligase cytoplasmic"/>
    <property type="match status" value="1"/>
</dbReference>
<dbReference type="FunFam" id="3.40.50.620:FF:000037">
    <property type="entry name" value="Glutamine--tRNA ligase cytoplasmic"/>
    <property type="match status" value="1"/>
</dbReference>
<dbReference type="Gene3D" id="1.10.10.2420">
    <property type="match status" value="1"/>
</dbReference>
<dbReference type="Gene3D" id="1.10.8.1290">
    <property type="entry name" value="Glutaminyl-tRNA synthetase, non-specific RNA binding region part 1, domain 1"/>
    <property type="match status" value="1"/>
</dbReference>
<dbReference type="Gene3D" id="3.40.50.620">
    <property type="entry name" value="HUPs"/>
    <property type="match status" value="1"/>
</dbReference>
<dbReference type="Gene3D" id="2.40.240.10">
    <property type="entry name" value="Ribosomal Protein L25, Chain P"/>
    <property type="match status" value="2"/>
</dbReference>
<dbReference type="InterPro" id="IPR001412">
    <property type="entry name" value="aa-tRNA-synth_I_CS"/>
</dbReference>
<dbReference type="InterPro" id="IPR004514">
    <property type="entry name" value="Gln-tRNA-synth"/>
</dbReference>
<dbReference type="InterPro" id="IPR007638">
    <property type="entry name" value="Gln-tRNA-synth_Ib_RNA-bd_2"/>
</dbReference>
<dbReference type="InterPro" id="IPR007639">
    <property type="entry name" value="Gln-tRNA-synth_Ib_RNA-bd_N"/>
</dbReference>
<dbReference type="InterPro" id="IPR042558">
    <property type="entry name" value="Gln-tRNA-synth_Ib_RNA-bd_N_1"/>
</dbReference>
<dbReference type="InterPro" id="IPR042559">
    <property type="entry name" value="Gln-tRNA-synth_Ib_RNA-bd_N_2"/>
</dbReference>
<dbReference type="InterPro" id="IPR050132">
    <property type="entry name" value="Gln/Glu-tRNA_Ligase"/>
</dbReference>
<dbReference type="InterPro" id="IPR000924">
    <property type="entry name" value="Glu/Gln-tRNA-synth"/>
</dbReference>
<dbReference type="InterPro" id="IPR020058">
    <property type="entry name" value="Glu/Gln-tRNA-synth_Ib_cat-dom"/>
</dbReference>
<dbReference type="InterPro" id="IPR020059">
    <property type="entry name" value="Glu/Gln-tRNA-synth_Ib_codon-bd"/>
</dbReference>
<dbReference type="InterPro" id="IPR020056">
    <property type="entry name" value="Rbsml_bL25/Gln-tRNA_synth_N"/>
</dbReference>
<dbReference type="InterPro" id="IPR011035">
    <property type="entry name" value="Ribosomal_bL25/Gln-tRNA_synth"/>
</dbReference>
<dbReference type="InterPro" id="IPR014729">
    <property type="entry name" value="Rossmann-like_a/b/a_fold"/>
</dbReference>
<dbReference type="InterPro" id="IPR049437">
    <property type="entry name" value="tRNA-synt_1c_C2"/>
</dbReference>
<dbReference type="NCBIfam" id="TIGR00440">
    <property type="entry name" value="glnS"/>
    <property type="match status" value="1"/>
</dbReference>
<dbReference type="PANTHER" id="PTHR43097:SF4">
    <property type="entry name" value="GLUTAMINE--TRNA LIGASE"/>
    <property type="match status" value="1"/>
</dbReference>
<dbReference type="PANTHER" id="PTHR43097">
    <property type="entry name" value="GLUTAMINE-TRNA LIGASE"/>
    <property type="match status" value="1"/>
</dbReference>
<dbReference type="Pfam" id="PF00749">
    <property type="entry name" value="tRNA-synt_1c"/>
    <property type="match status" value="1"/>
</dbReference>
<dbReference type="Pfam" id="PF03950">
    <property type="entry name" value="tRNA-synt_1c_C"/>
    <property type="match status" value="1"/>
</dbReference>
<dbReference type="Pfam" id="PF20974">
    <property type="entry name" value="tRNA-synt_1c_C2"/>
    <property type="match status" value="1"/>
</dbReference>
<dbReference type="Pfam" id="PF04558">
    <property type="entry name" value="tRNA_synt_1c_R1"/>
    <property type="match status" value="1"/>
</dbReference>
<dbReference type="Pfam" id="PF04557">
    <property type="entry name" value="tRNA_synt_1c_R2"/>
    <property type="match status" value="1"/>
</dbReference>
<dbReference type="PRINTS" id="PR00987">
    <property type="entry name" value="TRNASYNTHGLU"/>
</dbReference>
<dbReference type="SUPFAM" id="SSF52374">
    <property type="entry name" value="Nucleotidylyl transferase"/>
    <property type="match status" value="1"/>
</dbReference>
<dbReference type="SUPFAM" id="SSF50715">
    <property type="entry name" value="Ribosomal protein L25-like"/>
    <property type="match status" value="1"/>
</dbReference>
<dbReference type="PROSITE" id="PS00178">
    <property type="entry name" value="AA_TRNA_LIGASE_I"/>
    <property type="match status" value="1"/>
</dbReference>
<sequence length="795" mass="91247">MVLKDDNSEKSIELFISIGLDEKTARNTINNNKVTANLTAVIHEAAVTDGCDRNTGNLLYSVATKFPTNALVHRPTLLKYIVNSKIKTPAQLEAAFAFFASTGPEDFKLNEFEEACGVGIEVSPEDIEKAVKGIFEENKKTILEQRYRTNVGELFGHVRKSLPWADPKIVKKLIDEKMYELLGEKTAADNEKPTKKKEKKEKPAKVEEKKAVVETTAEPSEEELNPYTIFPQPEQNFMVHTEVFFSDGSILRCSNTKEVLDKHLKVTGGKVYTRFPPEPNGYLHIGHAKAMFVDFGLAKERGGCCYLRYDDTNPEAEKEEYINHIEEIVKWMGWEPFKITYTSDYFQELYDLAVELIRRGHAYVDHQTADEIKEYREKKMNSPWRDRPIEESLKLFDEMRRGIIEEGKATLRMKQDMQSDNFNMYDLIAYRIKFAPHPKAGDKWCIYPSYDYAHCTVDSLENITHSLCTLEFETRRASYYWLLHSLSLYMPYVWEYSRLNVTNTVMSKRKLNYIVTNKYVDGWDDPRLLTLSGLRRRGVTSTAINAFVRGIGITRSDGSMIHVSRLEHHIREELNKTAPRTMVVLNPLKVVITNLESDKLIELDAKRWPDAQNDDPSAFYKVPFSRVVYIDQSDFRMKDSKDYYGLAPGKSVLLRYAFPIKCTNVVFADDNETVREIHAEYDPEKKSKPKGVLHWVAESSPGEEPIKVEVRLFEKLFNSENPAELNDAWLTDINPNSKMVISGAYAVSTLKDAAVGDRFQFERLGYYAVDKDSEPGKLVFNRTVTLRDSYGKGGK</sequence>
<organism>
    <name type="scientific">Arabidopsis thaliana</name>
    <name type="common">Mouse-ear cress</name>
    <dbReference type="NCBI Taxonomy" id="3702"/>
    <lineage>
        <taxon>Eukaryota</taxon>
        <taxon>Viridiplantae</taxon>
        <taxon>Streptophyta</taxon>
        <taxon>Embryophyta</taxon>
        <taxon>Tracheophyta</taxon>
        <taxon>Spermatophyta</taxon>
        <taxon>Magnoliopsida</taxon>
        <taxon>eudicotyledons</taxon>
        <taxon>Gunneridae</taxon>
        <taxon>Pentapetalae</taxon>
        <taxon>rosids</taxon>
        <taxon>malvids</taxon>
        <taxon>Brassicales</taxon>
        <taxon>Brassicaceae</taxon>
        <taxon>Camelineae</taxon>
        <taxon>Arabidopsis</taxon>
    </lineage>
</organism>
<accession>Q8W4F3</accession>
<accession>A4UVN3</accession>
<gene>
    <name evidence="5" type="primary">OVA9</name>
    <name evidence="9" type="ordered locus">At1g25350</name>
    <name evidence="10" type="ORF">F4F7.26</name>
</gene>
<name>SYQ_ARATH</name>